<reference key="1">
    <citation type="journal article" date="2000" name="Nucleic Acids Res.">
        <title>Complete genome sequence of the alkaliphilic bacterium Bacillus halodurans and genomic sequence comparison with Bacillus subtilis.</title>
        <authorList>
            <person name="Takami H."/>
            <person name="Nakasone K."/>
            <person name="Takaki Y."/>
            <person name="Maeno G."/>
            <person name="Sasaki R."/>
            <person name="Masui N."/>
            <person name="Fuji F."/>
            <person name="Hirama C."/>
            <person name="Nakamura Y."/>
            <person name="Ogasawara N."/>
            <person name="Kuhara S."/>
            <person name="Horikoshi K."/>
        </authorList>
    </citation>
    <scope>NUCLEOTIDE SEQUENCE [LARGE SCALE GENOMIC DNA]</scope>
    <source>
        <strain>ATCC BAA-125 / DSM 18197 / FERM 7344 / JCM 9153 / C-125</strain>
    </source>
</reference>
<feature type="propeptide" id="PRO_0000026862" evidence="1">
    <location>
        <begin position="1"/>
        <end position="15"/>
    </location>
</feature>
<feature type="chain" id="PRO_0000026863" description="Germination protease">
    <location>
        <begin position="16"/>
        <end position="372"/>
    </location>
</feature>
<keyword id="KW-0378">Hydrolase</keyword>
<keyword id="KW-0645">Protease</keyword>
<keyword id="KW-1185">Reference proteome</keyword>
<keyword id="KW-0865">Zymogen</keyword>
<name>GPR_HALH5</name>
<accession>Q9KD78</accession>
<proteinExistence type="inferred from homology"/>
<sequence>MVKELNLEQYNVRTDLAIEAHDIVKEQEAQEAKQPASTVEGFDIEETVMDGVKVSKVVIHPLGAERTGKKAGRYLTFESQGIRKKDTDIQEKMERVFAQQFSQFMGELGITKDHTCLVVGLGNWNVTPDALGPITVENLLVTRHLFTLAPEEVGEGFRPVSAIAPGVMGVTGIETSDVIYGIIEQTKPDFVIAVDALASRSIERVNATIQVSDTGIHPGSGVGNKRKELSKETLGIPVIAVGIPTVVDAVTITSDAIDYVLKHFGRELREREKPSRALAPAGMTFGERRELTDEDLPPEEKRKTFLGMMGTLPEGEKRQLIQEVLAPLGHNLMVTPKEVDVFIEDMANVIASGLNAALHQGVNQDNVGAYTH</sequence>
<dbReference type="EC" id="3.4.24.78" evidence="1"/>
<dbReference type="EMBL" id="BA000004">
    <property type="protein sequence ID" value="BAB05059.1"/>
    <property type="molecule type" value="Genomic_DNA"/>
</dbReference>
<dbReference type="PIR" id="D83817">
    <property type="entry name" value="D83817"/>
</dbReference>
<dbReference type="RefSeq" id="WP_010897506.1">
    <property type="nucleotide sequence ID" value="NC_002570.2"/>
</dbReference>
<dbReference type="SMR" id="Q9KD78"/>
<dbReference type="STRING" id="272558.gene:10727234"/>
<dbReference type="MEROPS" id="A25.001"/>
<dbReference type="KEGG" id="bha:BH1340"/>
<dbReference type="eggNOG" id="COG0680">
    <property type="taxonomic scope" value="Bacteria"/>
</dbReference>
<dbReference type="HOGENOM" id="CLU_055087_1_0_9"/>
<dbReference type="OrthoDB" id="9777293at2"/>
<dbReference type="Proteomes" id="UP000001258">
    <property type="component" value="Chromosome"/>
</dbReference>
<dbReference type="GO" id="GO:0004222">
    <property type="term" value="F:metalloendopeptidase activity"/>
    <property type="evidence" value="ECO:0007669"/>
    <property type="project" value="UniProtKB-UniRule"/>
</dbReference>
<dbReference type="GO" id="GO:0006508">
    <property type="term" value="P:proteolysis"/>
    <property type="evidence" value="ECO:0007669"/>
    <property type="project" value="UniProtKB-UniRule"/>
</dbReference>
<dbReference type="GO" id="GO:0009847">
    <property type="term" value="P:spore germination"/>
    <property type="evidence" value="ECO:0007669"/>
    <property type="project" value="UniProtKB-UniRule"/>
</dbReference>
<dbReference type="Gene3D" id="3.40.50.1450">
    <property type="entry name" value="HybD-like"/>
    <property type="match status" value="1"/>
</dbReference>
<dbReference type="HAMAP" id="MF_00626">
    <property type="entry name" value="Germination_prot"/>
    <property type="match status" value="1"/>
</dbReference>
<dbReference type="InterPro" id="IPR023430">
    <property type="entry name" value="Pept_HybD-like_dom_sf"/>
</dbReference>
<dbReference type="InterPro" id="IPR005080">
    <property type="entry name" value="Peptidase_A25"/>
</dbReference>
<dbReference type="NCBIfam" id="TIGR01441">
    <property type="entry name" value="GPR"/>
    <property type="match status" value="1"/>
</dbReference>
<dbReference type="Pfam" id="PF03418">
    <property type="entry name" value="Peptidase_A25"/>
    <property type="match status" value="1"/>
</dbReference>
<dbReference type="PIRSF" id="PIRSF019549">
    <property type="entry name" value="Peptidase_A25"/>
    <property type="match status" value="1"/>
</dbReference>
<dbReference type="SUPFAM" id="SSF53163">
    <property type="entry name" value="HybD-like"/>
    <property type="match status" value="1"/>
</dbReference>
<gene>
    <name evidence="1" type="primary">gpr</name>
    <name type="ordered locus">BH1340</name>
</gene>
<protein>
    <recommendedName>
        <fullName evidence="1">Germination protease</fullName>
        <ecNumber evidence="1">3.4.24.78</ecNumber>
    </recommendedName>
    <alternativeName>
        <fullName evidence="1">GPR endopeptidase</fullName>
    </alternativeName>
    <alternativeName>
        <fullName evidence="1">Germination proteinase</fullName>
    </alternativeName>
    <alternativeName>
        <fullName evidence="1">Spore protease</fullName>
    </alternativeName>
</protein>
<evidence type="ECO:0000255" key="1">
    <source>
        <dbReference type="HAMAP-Rule" id="MF_00626"/>
    </source>
</evidence>
<organism>
    <name type="scientific">Halalkalibacterium halodurans (strain ATCC BAA-125 / DSM 18197 / FERM 7344 / JCM 9153 / C-125)</name>
    <name type="common">Bacillus halodurans</name>
    <dbReference type="NCBI Taxonomy" id="272558"/>
    <lineage>
        <taxon>Bacteria</taxon>
        <taxon>Bacillati</taxon>
        <taxon>Bacillota</taxon>
        <taxon>Bacilli</taxon>
        <taxon>Bacillales</taxon>
        <taxon>Bacillaceae</taxon>
        <taxon>Halalkalibacterium (ex Joshi et al. 2022)</taxon>
    </lineage>
</organism>
<comment type="function">
    <text evidence="1">Initiates the rapid degradation of small, acid-soluble proteins during spore germination.</text>
</comment>
<comment type="catalytic activity">
    <reaction evidence="1">
        <text>Endopeptidase action with P4 Glu or Asp, P1 preferably Glu &gt; Asp, P1' hydrophobic and P2' Ala.</text>
        <dbReference type="EC" id="3.4.24.78"/>
    </reaction>
</comment>
<comment type="subunit">
    <text evidence="1">Homotetramer.</text>
</comment>
<comment type="PTM">
    <text evidence="1">Autoproteolytically processed. The inactive tetrameric zymogen termed p46 autoprocesses to a smaller form termed p41, which is active only during spore germination.</text>
</comment>
<comment type="similarity">
    <text evidence="1">Belongs to the peptidase A25 family.</text>
</comment>